<accession>P35961</accession>
<proteinExistence type="evidence at protein level"/>
<comment type="function">
    <molecule>Envelope glycoprotein gp160</molecule>
    <text evidence="1">Oligomerizes in the host endoplasmic reticulum into predominantly trimers. In a second time, gp160 transits in the host Golgi, where glycosylation is completed. The precursor is then proteolytically cleaved in the trans-Golgi and thereby activated by cellular furin or furin-like proteases to produce gp120 and gp41.</text>
</comment>
<comment type="function">
    <molecule>Surface protein gp120</molecule>
    <text evidence="1">Attaches the virus to the host lymphoid cell by binding to the primary receptor CD4. This interaction induces a structural rearrangement creating a high affinity binding site for a chemokine coreceptor like CXCR4 and/or CCR5. Acts as a ligand for CD209/DC-SIGN and CLEC4M/DC-SIGNR, which are respectively found on dendritic cells (DCs), and on endothelial cells of liver sinusoids and lymph node sinuses. These interactions allow capture of viral particles at mucosal surfaces by these cells and subsequent transmission to permissive cells. HIV subverts the migration properties of dendritic cells to gain access to CD4+ T-cells in lymph nodes. Virus transmission to permissive T-cells occurs either in trans (without DCs infection, through viral capture and transmission), or in cis (following DCs productive infection, through the usual CD4-gp120 interaction), thereby inducing a robust infection. In trans infection, bound virions remain infectious over days and it is proposed that they are not degraded, but protected in non-lysosomal acidic organelles within the DCs close to the cell membrane thus contributing to the viral infectious potential during DCs' migration from the periphery to the lymphoid tissues. On arrival at lymphoid tissues, intact virions recycle back to DCs' cell surface allowing virus transmission to CD4+ T-cells.</text>
</comment>
<comment type="function">
    <molecule>Transmembrane protein gp41</molecule>
    <text evidence="1">Acts as a class I viral fusion protein. Under the current model, the protein has at least 3 conformational states: pre-fusion native state, pre-hairpin intermediate state, and post-fusion hairpin state. During fusion of viral and target intracellular membranes, the coiled coil regions (heptad repeats) assume a trimer-of-hairpins structure, positioning the fusion peptide in close proximity to the C-terminal region of the ectodomain. The formation of this structure appears to drive apposition and subsequent fusion of viral and target cell membranes. Complete fusion occurs in host cell endosomes and is dynamin-dependent, however some lipid transfer might occur at the plasma membrane. The virus undergoes clathrin-dependent internalization long before endosomal fusion, thus minimizing the surface exposure of conserved viral epitopes during fusion and reducing the efficacy of inhibitors targeting these epitopes. Membranes fusion leads to delivery of the nucleocapsid into the cytoplasm.</text>
</comment>
<comment type="subunit">
    <molecule>Surface protein gp120</molecule>
    <text evidence="1">The mature envelope protein (Env) consists of a homotrimer of non-covalently associated gp120-gp41 heterodimers. The resulting complex protrudes from the virus surface as a spike. There seems to be as few as 10 spikes on the average virion. Interacts with host CD4, CCR5 and CXCR4. Gp120 also interacts with the C-type lectins CD209/DC-SIGN and CLEC4M/DC-SIGNR (collectively referred to as DC-SIGN(R)). Gp120 and gp41 interact with GalCer. Gp120 interacts with host ITGA4/ITGB7 complex; on CD4+ T-cells, this interaction results in rapid activation of integrin ITGAL/LFA-1, which facilitates efficient cell-to-cell spreading of HIV-1. Gp120 interacts with cell-associated heparan sulfate; this interaction increases virus infectivity on permissive cells and may be involved in infection of CD4- cells.</text>
</comment>
<comment type="subunit">
    <molecule>Transmembrane protein gp41</molecule>
    <text evidence="1">The mature envelope protein (Env) consists of a homotrimer of non-covalently associated gp120-gp41 heterodimers. The resulting complex protrudes from the virus surface as a spike. There seems to be as few as 10 spikes on the average virion.</text>
</comment>
<comment type="subcellular location">
    <molecule>Surface protein gp120</molecule>
    <subcellularLocation>
        <location evidence="1">Virion membrane</location>
        <topology evidence="1">Peripheral membrane protein</topology>
    </subcellularLocation>
    <subcellularLocation>
        <location evidence="1">Host cell membrane</location>
        <topology evidence="1">Peripheral membrane protein</topology>
    </subcellularLocation>
    <subcellularLocation>
        <location evidence="1">Host endosome membrane</location>
        <topology evidence="1">Single-pass type I membrane protein</topology>
    </subcellularLocation>
    <text evidence="1">The surface protein is not anchored to the viral envelope, but associates with the extravirion surface through its binding to TM. It is probably concentrated at the site of budding and incorporated into the virions possibly by contacts between the cytoplasmic tail of Env and the N-terminus of Gag.</text>
</comment>
<comment type="subcellular location">
    <molecule>Transmembrane protein gp41</molecule>
    <subcellularLocation>
        <location evidence="1">Virion membrane</location>
        <topology evidence="1">Single-pass type I membrane protein</topology>
    </subcellularLocation>
    <subcellularLocation>
        <location evidence="1">Host cell membrane</location>
        <topology evidence="1">Single-pass type I membrane protein</topology>
    </subcellularLocation>
    <subcellularLocation>
        <location evidence="1">Host endosome membrane</location>
        <topology evidence="1">Single-pass type I membrane protein</topology>
    </subcellularLocation>
    <text evidence="1">It is probably concentrated at the site of budding and incorporated into the virions possibly by contacts between the cytoplasmic tail of Env and the N-terminus of Gag.</text>
</comment>
<comment type="domain">
    <text evidence="1">Some of the most genetically diverse regions of the viral genome are present in Env. They are called variable regions 1 through 5 (V1 through V5). Coreceptor usage of gp120 is determined mainly by the primary structure of the third variable region (V3) in the outer domain of gp120. The sequence of V3 determines which coreceptor, CCR5 and/or CXCR4 (corresponding to R5/macrophage, X4/T cell and R5X4/T cell and macrophage tropism), is used to trigger the fusion potential of the Env complex, and hence which cells the virus can infect. Binding to CCR5 involves a region adjacent in addition to V3.</text>
</comment>
<comment type="domain">
    <text evidence="1">The membrane proximal external region (MPER) present in gp41 is a tryptophan-rich region recognized by the antibodies 2F5, Z13, and 4E10. MPER seems to play a role in fusion.</text>
</comment>
<comment type="domain">
    <text evidence="1">The 17 amino acids long immunosuppressive region is present in many retroviral envelope proteins. Synthetic peptides derived from this relatively conserved sequence inhibit immune function in vitro and in vivo.</text>
</comment>
<comment type="domain">
    <text evidence="1">The YXXL motif is involved in determining the exact site of viral release at the surface of infected mononuclear cells and promotes endocytosis. YXXL and di-leucine endocytosis motifs interact directly or indirectly with the clathrin adapter complexes, opperate independently, and their activities are not additive.</text>
</comment>
<comment type="domain">
    <text evidence="1">The CD4-binding region is targeted by the antibody b12.</text>
</comment>
<comment type="PTM">
    <text evidence="1">Highly glycosylated by host. The high number of glycan on the protein is reffered to as 'glycan shield' because it contributes to hide protein sequence from adaptive immune system.</text>
</comment>
<comment type="PTM">
    <text evidence="1">Palmitoylation of the transmembrane protein and of Env polyprotein (prior to its proteolytic cleavage) is essential for their association with host cell membrane lipid rafts. Palmitoylation is therefore required for envelope trafficking to classical lipid rafts, but not for viral replication.</text>
</comment>
<comment type="PTM">
    <text evidence="1">Specific enzymatic cleavages in vivo yield mature proteins. Envelope glycoproteins are synthesized as an inactive precursor that is heavily N-glycosylated and processed likely by host cell furin in the Golgi to yield the mature SU and TM proteins. The cleavage site between SU and TM requires the minimal sequence [KR]-X-[KR]-R. About 2 of the 9 disulfide bonds of gp41 are reduced by P4HB/PDI, following binding to CD4 receptor.</text>
</comment>
<comment type="miscellaneous">
    <text evidence="1">Inhibitors targeting HIV-1 viral envelope proteins are used as antiretroviral drugs. Attachment of virions to the cell surface via non-specific interactions and CD4 binding can be blocked by inhibitors that include cyanovirin-N, cyclotriazadisulfonamide analogs, PRO 2000, TNX 355 and PRO 542. In addition, BMS 806 can block CD4-induced conformational changes. Env interactions with the coreceptor molecules can be targeted by CCR5 antagonists including SCH-D, maraviroc (UK 427857) and aplaviroc (GW 873140), and the CXCR4 antagonist AMD 070. Fusion of viral and cellular membranes can be inhibited by peptides such as enfuvirtide and tifuvirtide (T 1249). Resistance to inhibitors associated with mutations in Env are observed. Most of the time, single mutations confer only a modest reduction in drug susceptibility. Combination of several mutations is usually required to develop a high-level drug resistance.</text>
</comment>
<comment type="miscellaneous">
    <text evidence="1">HIV-1 lineages are divided in three main groups, M (for Major), O (for Outlier), and N (for New, or Non-M, Non-O). The vast majority of strains found worldwide belong to the group M. Group O seems to be endemic to and largely confined to Cameroon and neighboring countries in West Central Africa, where these viruses represent a small minority of HIV-1 strains. The group N is represented by a limited number of isolates from Cameroonian persons. The group M is further subdivided in 9 clades or subtypes (A to D, F to H, J and K).</text>
</comment>
<comment type="similarity">
    <text evidence="1">Belongs to the HIV-1 env protein family.</text>
</comment>
<comment type="online information" name="hivdb">
    <link uri="https://hivdb.stanford.edu"/>
    <text>HIV drug resistance database</text>
</comment>
<comment type="online information" name="HIV drug resistance mutations">
    <link uri="https://www.iasusa.org/hiv-drug-resistance/hiv-drug-resistance-mutations/"/>
</comment>
<gene>
    <name evidence="1" type="primary">env</name>
</gene>
<dbReference type="EMBL" id="M93258">
    <property type="status" value="NOT_ANNOTATED_CDS"/>
    <property type="molecule type" value="Genomic_RNA"/>
</dbReference>
<dbReference type="PIR" id="H44001">
    <property type="entry name" value="H44001"/>
</dbReference>
<dbReference type="PDB" id="1G9N">
    <property type="method" value="X-ray"/>
    <property type="resolution" value="2.90 A"/>
    <property type="chains" value="G=82-126, G=191-293, G=325-479"/>
</dbReference>
<dbReference type="PDB" id="1RZK">
    <property type="method" value="X-ray"/>
    <property type="resolution" value="2.90 A"/>
    <property type="chains" value="G=82-479"/>
</dbReference>
<dbReference type="PDB" id="1YYL">
    <property type="method" value="X-ray"/>
    <property type="resolution" value="2.75 A"/>
    <property type="chains" value="G/P=82-126, G/P=191-293, G/P=325-483"/>
</dbReference>
<dbReference type="PDB" id="1YYM">
    <property type="method" value="X-ray"/>
    <property type="resolution" value="2.20 A"/>
    <property type="chains" value="G/P=82-126, G/P=191-296, G/P=325-483"/>
</dbReference>
<dbReference type="PDB" id="2I5Y">
    <property type="method" value="X-ray"/>
    <property type="resolution" value="2.20 A"/>
    <property type="chains" value="G/P=82-126, G/P=191-293, G/P=325-479"/>
</dbReference>
<dbReference type="PDB" id="2I60">
    <property type="method" value="X-ray"/>
    <property type="resolution" value="2.40 A"/>
    <property type="chains" value="G/P=82-126, G/P=191-293, G/P=325-479"/>
</dbReference>
<dbReference type="PDB" id="2NY7">
    <property type="method" value="X-ray"/>
    <property type="resolution" value="2.30 A"/>
    <property type="chains" value="G=158-479"/>
</dbReference>
<dbReference type="PDB" id="2QAD">
    <property type="method" value="X-ray"/>
    <property type="resolution" value="3.30 A"/>
    <property type="chains" value="A/E=88-120, A/E=195-479"/>
</dbReference>
<dbReference type="PDB" id="3HI1">
    <property type="method" value="X-ray"/>
    <property type="resolution" value="2.90 A"/>
    <property type="chains" value="G/J=89-122, G/J=195-479"/>
</dbReference>
<dbReference type="PDB" id="3TGQ">
    <property type="method" value="X-ray"/>
    <property type="resolution" value="3.40 A"/>
    <property type="chains" value="A/B/C/D=43-479"/>
</dbReference>
<dbReference type="PDB" id="4DVR">
    <property type="method" value="X-ray"/>
    <property type="resolution" value="2.50 A"/>
    <property type="chains" value="G=82-122, G=199-301, G=324-484"/>
</dbReference>
<dbReference type="PDB" id="4JO3">
    <property type="method" value="X-ray"/>
    <property type="resolution" value="2.60 A"/>
    <property type="chains" value="P/Q=313-327"/>
</dbReference>
<dbReference type="PDB" id="4JZW">
    <property type="method" value="X-ray"/>
    <property type="resolution" value="1.78 A"/>
    <property type="chains" value="A/G=43-479"/>
</dbReference>
<dbReference type="PDB" id="4JZZ">
    <property type="method" value="X-ray"/>
    <property type="resolution" value="1.49 A"/>
    <property type="chains" value="A=43-479"/>
</dbReference>
<dbReference type="PDB" id="4K0A">
    <property type="method" value="X-ray"/>
    <property type="resolution" value="2.13 A"/>
    <property type="chains" value="A=43-479"/>
</dbReference>
<dbReference type="PDB" id="4KA2">
    <property type="method" value="X-ray"/>
    <property type="resolution" value="1.79 A"/>
    <property type="chains" value="A=43-479"/>
</dbReference>
<dbReference type="PDB" id="4LAJ">
    <property type="method" value="X-ray"/>
    <property type="resolution" value="2.14 A"/>
    <property type="chains" value="A/B/F/J=43-479"/>
</dbReference>
<dbReference type="PDB" id="4R4F">
    <property type="method" value="X-ray"/>
    <property type="resolution" value="3.51 A"/>
    <property type="chains" value="A=43-479"/>
</dbReference>
<dbReference type="PDB" id="4RQS">
    <property type="method" value="X-ray"/>
    <property type="resolution" value="4.49 A"/>
    <property type="chains" value="G=82-126, G=191-293, G=325-479"/>
</dbReference>
<dbReference type="PDB" id="4RWY">
    <property type="method" value="X-ray"/>
    <property type="resolution" value="2.13 A"/>
    <property type="chains" value="A=43-479"/>
</dbReference>
<dbReference type="PDB" id="5A7X">
    <property type="method" value="EM"/>
    <property type="resolution" value="17.00 A"/>
    <property type="chains" value="A/E/I=82-479"/>
</dbReference>
<dbReference type="PDB" id="5A8H">
    <property type="method" value="EM"/>
    <property type="resolution" value="23.00 A"/>
    <property type="chains" value="A/G/M=82-479"/>
</dbReference>
<dbReference type="PDBsum" id="1G9N"/>
<dbReference type="PDBsum" id="1RZK"/>
<dbReference type="PDBsum" id="1YYL"/>
<dbReference type="PDBsum" id="1YYM"/>
<dbReference type="PDBsum" id="2I5Y"/>
<dbReference type="PDBsum" id="2I60"/>
<dbReference type="PDBsum" id="2NY7"/>
<dbReference type="PDBsum" id="2QAD"/>
<dbReference type="PDBsum" id="3HI1"/>
<dbReference type="PDBsum" id="3TGQ"/>
<dbReference type="PDBsum" id="4DVR"/>
<dbReference type="PDBsum" id="4JO3"/>
<dbReference type="PDBsum" id="4JZW"/>
<dbReference type="PDBsum" id="4JZZ"/>
<dbReference type="PDBsum" id="4K0A"/>
<dbReference type="PDBsum" id="4KA2"/>
<dbReference type="PDBsum" id="4LAJ"/>
<dbReference type="PDBsum" id="4R4F"/>
<dbReference type="PDBsum" id="4RQS"/>
<dbReference type="PDBsum" id="4RWY"/>
<dbReference type="PDBsum" id="5A7X"/>
<dbReference type="PDBsum" id="5A8H"/>
<dbReference type="SMR" id="P35961"/>
<dbReference type="DIP" id="DIP-48439N"/>
<dbReference type="IntAct" id="P35961">
    <property type="interactions" value="1"/>
</dbReference>
<dbReference type="BindingDB" id="P35961"/>
<dbReference type="ChEMBL" id="CHEMBL6180"/>
<dbReference type="DrugBank" id="DB11854">
    <property type="generic name" value="Astodrimer"/>
</dbReference>
<dbReference type="DrugBank" id="DB04639">
    <property type="generic name" value="Biphenylalanine"/>
</dbReference>
<dbReference type="GlyCosmos" id="P35961">
    <property type="glycosylation" value="27 sites, No reported glycans"/>
</dbReference>
<dbReference type="ABCD" id="P35961">
    <property type="antibodies" value="7 sequenced antibodies"/>
</dbReference>
<dbReference type="Reactome" id="R-HSA-5621480">
    <property type="pathway name" value="Dectin-2 family"/>
</dbReference>
<dbReference type="EvolutionaryTrace" id="P35961"/>
<dbReference type="Proteomes" id="UP000007419">
    <property type="component" value="Genome"/>
</dbReference>
<dbReference type="GO" id="GO:0044175">
    <property type="term" value="C:host cell endosome membrane"/>
    <property type="evidence" value="ECO:0007669"/>
    <property type="project" value="UniProtKB-SubCell"/>
</dbReference>
<dbReference type="GO" id="GO:0020002">
    <property type="term" value="C:host cell plasma membrane"/>
    <property type="evidence" value="ECO:0007669"/>
    <property type="project" value="UniProtKB-SubCell"/>
</dbReference>
<dbReference type="GO" id="GO:0016020">
    <property type="term" value="C:membrane"/>
    <property type="evidence" value="ECO:0007669"/>
    <property type="project" value="UniProtKB-UniRule"/>
</dbReference>
<dbReference type="GO" id="GO:0019031">
    <property type="term" value="C:viral envelope"/>
    <property type="evidence" value="ECO:0007669"/>
    <property type="project" value="UniProtKB-KW"/>
</dbReference>
<dbReference type="GO" id="GO:0055036">
    <property type="term" value="C:virion membrane"/>
    <property type="evidence" value="ECO:0007669"/>
    <property type="project" value="UniProtKB-SubCell"/>
</dbReference>
<dbReference type="GO" id="GO:0005198">
    <property type="term" value="F:structural molecule activity"/>
    <property type="evidence" value="ECO:0007669"/>
    <property type="project" value="UniProtKB-UniRule"/>
</dbReference>
<dbReference type="GO" id="GO:0075512">
    <property type="term" value="P:clathrin-dependent endocytosis of virus by host cell"/>
    <property type="evidence" value="ECO:0007669"/>
    <property type="project" value="UniProtKB-UniRule"/>
</dbReference>
<dbReference type="GO" id="GO:0039654">
    <property type="term" value="P:fusion of virus membrane with host endosome membrane"/>
    <property type="evidence" value="ECO:0007669"/>
    <property type="project" value="UniProtKB-UniRule"/>
</dbReference>
<dbReference type="GO" id="GO:0019064">
    <property type="term" value="P:fusion of virus membrane with host plasma membrane"/>
    <property type="evidence" value="ECO:0007669"/>
    <property type="project" value="UniProtKB-UniRule"/>
</dbReference>
<dbReference type="GO" id="GO:1903908">
    <property type="term" value="P:positive regulation of plasma membrane raft polarization"/>
    <property type="evidence" value="ECO:0007669"/>
    <property type="project" value="UniProtKB-UniRule"/>
</dbReference>
<dbReference type="GO" id="GO:1903911">
    <property type="term" value="P:positive regulation of receptor clustering"/>
    <property type="evidence" value="ECO:0007669"/>
    <property type="project" value="UniProtKB-UniRule"/>
</dbReference>
<dbReference type="GO" id="GO:0019082">
    <property type="term" value="P:viral protein processing"/>
    <property type="evidence" value="ECO:0007669"/>
    <property type="project" value="UniProtKB-UniRule"/>
</dbReference>
<dbReference type="GO" id="GO:0019062">
    <property type="term" value="P:virion attachment to host cell"/>
    <property type="evidence" value="ECO:0007669"/>
    <property type="project" value="UniProtKB-UniRule"/>
</dbReference>
<dbReference type="CDD" id="cd09909">
    <property type="entry name" value="HIV-1-like_HR1-HR2"/>
    <property type="match status" value="1"/>
</dbReference>
<dbReference type="FunFam" id="1.10.287.210:FF:000001">
    <property type="entry name" value="Envelope glycoprotein gp160"/>
    <property type="match status" value="1"/>
</dbReference>
<dbReference type="FunFam" id="1.20.5.490:FF:000001">
    <property type="entry name" value="Envelope glycoprotein gp160"/>
    <property type="match status" value="1"/>
</dbReference>
<dbReference type="FunFam" id="2.170.40.20:FF:000001">
    <property type="entry name" value="Envelope glycoprotein gp160"/>
    <property type="match status" value="1"/>
</dbReference>
<dbReference type="FunFam" id="2.170.40.20:FF:000003">
    <property type="entry name" value="Envelope glycoprotein gp160"/>
    <property type="match status" value="1"/>
</dbReference>
<dbReference type="Gene3D" id="1.10.287.210">
    <property type="match status" value="1"/>
</dbReference>
<dbReference type="Gene3D" id="2.170.40.20">
    <property type="entry name" value="Human immunodeficiency virus 1, Gp160, envelope glycoprotein"/>
    <property type="match status" value="2"/>
</dbReference>
<dbReference type="Gene3D" id="1.20.5.490">
    <property type="entry name" value="Single helix bin"/>
    <property type="match status" value="1"/>
</dbReference>
<dbReference type="HAMAP" id="MF_04083">
    <property type="entry name" value="HIV_ENV"/>
    <property type="match status" value="1"/>
</dbReference>
<dbReference type="InterPro" id="IPR036377">
    <property type="entry name" value="Gp120_core_sf"/>
</dbReference>
<dbReference type="InterPro" id="IPR037527">
    <property type="entry name" value="Gp160"/>
</dbReference>
<dbReference type="InterPro" id="IPR000328">
    <property type="entry name" value="GP41-like"/>
</dbReference>
<dbReference type="InterPro" id="IPR000777">
    <property type="entry name" value="HIV1_Gp120"/>
</dbReference>
<dbReference type="Pfam" id="PF00516">
    <property type="entry name" value="GP120"/>
    <property type="match status" value="1"/>
</dbReference>
<dbReference type="Pfam" id="PF00517">
    <property type="entry name" value="GP41"/>
    <property type="match status" value="1"/>
</dbReference>
<dbReference type="SUPFAM" id="SSF56502">
    <property type="entry name" value="gp120 core"/>
    <property type="match status" value="2"/>
</dbReference>
<dbReference type="SUPFAM" id="SSF58069">
    <property type="entry name" value="Virus ectodomain"/>
    <property type="match status" value="1"/>
</dbReference>
<reference key="1">
    <citation type="journal article" date="1992" name="J. Virol.">
        <title>Complete nucleotide sequence, genome organization, and biological properties of human immunodeficiency virus type 1 in vivo: evidence for limited defectiveness and complementation.</title>
        <authorList>
            <person name="Li Y."/>
            <person name="Hui H."/>
            <person name="Burgess C.J."/>
            <person name="Price R.W."/>
            <person name="Sharp P.M."/>
            <person name="Hahn B.H."/>
            <person name="Shaw G.M."/>
        </authorList>
    </citation>
    <scope>NUCLEOTIDE SEQUENCE [GENOMIC RNA]</scope>
</reference>
<reference key="2">
    <citation type="journal article" date="1998" name="Science">
        <title>A conserved HIV gp120 glycoprotein structure involved in chemokine receptor binding.</title>
        <authorList>
            <person name="Rizzuto C.D."/>
            <person name="Wyatt R."/>
            <person name="Hernandez-Ramos N."/>
            <person name="Sun Y."/>
            <person name="Kwong P.D."/>
            <person name="Hendrickson W.A."/>
            <person name="Sodroski J."/>
        </authorList>
    </citation>
    <scope>INTERACTION OF SURFACE PROTEIN GP120 WITH HUMAN CCR5</scope>
</reference>
<reference key="3">
    <citation type="journal article" date="2003" name="APMIS">
        <title>Pathogens target DC-SIGN to influence their fate DC-SIGN functions as a pathogen receptor with broad specificity.</title>
        <authorList>
            <person name="Geijtenbeek T.B."/>
            <person name="van Kooyk Y."/>
        </authorList>
    </citation>
    <scope>REVIEW</scope>
</reference>
<reference key="4">
    <citation type="journal article" date="2003" name="Biochim. Biophys. Acta">
        <title>The HIV Env-mediated fusion reaction.</title>
        <authorList>
            <person name="Gallo S.A."/>
            <person name="Finnegan C.M."/>
            <person name="Viard M."/>
            <person name="Raviv Y."/>
            <person name="Dimitrov A."/>
            <person name="Rawat S.S."/>
            <person name="Puri A."/>
            <person name="Durell S."/>
            <person name="Blumenthal R."/>
        </authorList>
    </citation>
    <scope>REVIEW</scope>
</reference>
<reference key="5">
    <citation type="journal article" date="2005" name="Cell Death Differ.">
        <title>Mechanisms of apoptosis induction by the HIV-1 envelope.</title>
        <authorList>
            <person name="Perfettini J.-L."/>
            <person name="Castedo M."/>
            <person name="Roumier T."/>
            <person name="Andreau K."/>
            <person name="Nardacci R."/>
            <person name="Piacentini M."/>
            <person name="Kroemer G."/>
        </authorList>
    </citation>
    <scope>REVIEW</scope>
</reference>
<reference key="6">
    <citation type="journal article" date="2005" name="AIDS Res. Hum. Retroviruses">
        <title>V3: HIV's switch-hitter.</title>
        <authorList>
            <person name="Hartley O."/>
            <person name="Klasse P.J."/>
            <person name="Sattentau Q.J."/>
            <person name="Moore J.P."/>
        </authorList>
    </citation>
    <scope>REVIEW</scope>
</reference>
<reference key="7">
    <citation type="journal article" date="2005" name="Drugs">
        <title>Emerging drug targets for antiretroviral therapy.</title>
        <authorList>
            <person name="Reeves J.D."/>
            <person name="Piefer A.J."/>
        </authorList>
    </citation>
    <scope>REVIEW</scope>
</reference>
<reference key="8">
    <citation type="journal article" date="2006" name="EMBO J.">
        <title>HIV and the chemokine system: 10 years later.</title>
        <authorList>
            <person name="Lusso P."/>
        </authorList>
    </citation>
    <scope>REVIEW</scope>
</reference>
<keyword id="KW-0002">3D-structure</keyword>
<keyword id="KW-0014">AIDS</keyword>
<keyword id="KW-0053">Apoptosis</keyword>
<keyword id="KW-1165">Clathrin-mediated endocytosis of virus by host</keyword>
<keyword id="KW-0165">Cleavage on pair of basic residues</keyword>
<keyword id="KW-0175">Coiled coil</keyword>
<keyword id="KW-1015">Disulfide bond</keyword>
<keyword id="KW-1170">Fusion of virus membrane with host endosomal membrane</keyword>
<keyword id="KW-1168">Fusion of virus membrane with host membrane</keyword>
<keyword id="KW-0325">Glycoprotein</keyword>
<keyword id="KW-1032">Host cell membrane</keyword>
<keyword id="KW-1039">Host endosome</keyword>
<keyword id="KW-1043">Host membrane</keyword>
<keyword id="KW-0945">Host-virus interaction</keyword>
<keyword id="KW-0449">Lipoprotein</keyword>
<keyword id="KW-0472">Membrane</keyword>
<keyword id="KW-0564">Palmitate</keyword>
<keyword id="KW-0732">Signal</keyword>
<keyword id="KW-0812">Transmembrane</keyword>
<keyword id="KW-1133">Transmembrane helix</keyword>
<keyword id="KW-1161">Viral attachment to host cell</keyword>
<keyword id="KW-0261">Viral envelope protein</keyword>
<keyword id="KW-0899">Viral immunoevasion</keyword>
<keyword id="KW-1162">Viral penetration into host cytoplasm</keyword>
<keyword id="KW-0946">Virion</keyword>
<keyword id="KW-1164">Virus endocytosis by host</keyword>
<keyword id="KW-1160">Virus entry into host cell</keyword>
<name>ENV_HV1Y2</name>
<organismHost>
    <name type="scientific">Homo sapiens</name>
    <name type="common">Human</name>
    <dbReference type="NCBI Taxonomy" id="9606"/>
</organismHost>
<evidence type="ECO:0000255" key="1">
    <source>
        <dbReference type="HAMAP-Rule" id="MF_04083"/>
    </source>
</evidence>
<evidence type="ECO:0000256" key="2">
    <source>
        <dbReference type="SAM" id="MobiDB-lite"/>
    </source>
</evidence>
<evidence type="ECO:0007829" key="3">
    <source>
        <dbReference type="PDB" id="1G9N"/>
    </source>
</evidence>
<evidence type="ECO:0007829" key="4">
    <source>
        <dbReference type="PDB" id="1RZK"/>
    </source>
</evidence>
<evidence type="ECO:0007829" key="5">
    <source>
        <dbReference type="PDB" id="1YYM"/>
    </source>
</evidence>
<evidence type="ECO:0007829" key="6">
    <source>
        <dbReference type="PDB" id="2I5Y"/>
    </source>
</evidence>
<evidence type="ECO:0007829" key="7">
    <source>
        <dbReference type="PDB" id="2QAD"/>
    </source>
</evidence>
<evidence type="ECO:0007829" key="8">
    <source>
        <dbReference type="PDB" id="3HI1"/>
    </source>
</evidence>
<evidence type="ECO:0007829" key="9">
    <source>
        <dbReference type="PDB" id="3TGQ"/>
    </source>
</evidence>
<evidence type="ECO:0007829" key="10">
    <source>
        <dbReference type="PDB" id="4DVR"/>
    </source>
</evidence>
<evidence type="ECO:0007829" key="11">
    <source>
        <dbReference type="PDB" id="4JZZ"/>
    </source>
</evidence>
<evidence type="ECO:0007829" key="12">
    <source>
        <dbReference type="PDB" id="4LAJ"/>
    </source>
</evidence>
<evidence type="ECO:0007829" key="13">
    <source>
        <dbReference type="PDB" id="4RWY"/>
    </source>
</evidence>
<organism>
    <name type="scientific">Human immunodeficiency virus type 1 group M subtype B (isolate YU-2)</name>
    <name type="common">HIV-1</name>
    <dbReference type="NCBI Taxonomy" id="362651"/>
    <lineage>
        <taxon>Viruses</taxon>
        <taxon>Riboviria</taxon>
        <taxon>Pararnavirae</taxon>
        <taxon>Artverviricota</taxon>
        <taxon>Revtraviricetes</taxon>
        <taxon>Ortervirales</taxon>
        <taxon>Retroviridae</taxon>
        <taxon>Orthoretrovirinae</taxon>
        <taxon>Lentivirus</taxon>
        <taxon>Human immunodeficiency virus type 1</taxon>
    </lineage>
</organism>
<feature type="signal peptide" evidence="1">
    <location>
        <begin position="1"/>
        <end position="31"/>
    </location>
</feature>
<feature type="chain" id="PRO_0000239469" description="Envelope glycoprotein gp160" evidence="1">
    <location>
        <begin position="32"/>
        <end position="843"/>
    </location>
</feature>
<feature type="chain" id="PRO_0000038377" description="Surface protein gp120" evidence="1">
    <location>
        <begin position="32"/>
        <end position="498"/>
    </location>
</feature>
<feature type="chain" id="PRO_0000038378" description="Transmembrane protein gp41" evidence="1">
    <location>
        <begin position="499"/>
        <end position="843"/>
    </location>
</feature>
<feature type="topological domain" description="Extracellular" evidence="1">
    <location>
        <begin position="32"/>
        <end position="671"/>
    </location>
</feature>
<feature type="transmembrane region" description="Helical" evidence="1">
    <location>
        <begin position="672"/>
        <end position="692"/>
    </location>
</feature>
<feature type="topological domain" description="Cytoplasmic" evidence="1">
    <location>
        <begin position="693"/>
        <end position="843"/>
    </location>
</feature>
<feature type="region of interest" description="V1" evidence="1">
    <location>
        <begin position="130"/>
        <end position="154"/>
    </location>
</feature>
<feature type="region of interest" description="V2" evidence="1">
    <location>
        <begin position="155"/>
        <end position="192"/>
    </location>
</feature>
<feature type="region of interest" description="V3" evidence="1">
    <location>
        <begin position="292"/>
        <end position="325"/>
    </location>
</feature>
<feature type="region of interest" description="CD4-binding loop" evidence="1">
    <location>
        <begin position="359"/>
        <end position="369"/>
    </location>
</feature>
<feature type="region of interest" description="V4" evidence="1">
    <location>
        <begin position="380"/>
        <end position="405"/>
    </location>
</feature>
<feature type="region of interest" description="V5">
    <location>
        <begin position="448"/>
        <end position="458"/>
    </location>
</feature>
<feature type="region of interest" description="V5" evidence="1">
    <location>
        <begin position="450"/>
        <end position="458"/>
    </location>
</feature>
<feature type="region of interest" description="Fusion peptide" evidence="1">
    <location>
        <begin position="499"/>
        <end position="519"/>
    </location>
</feature>
<feature type="region of interest" description="Immunosuppression" evidence="1">
    <location>
        <begin position="561"/>
        <end position="579"/>
    </location>
</feature>
<feature type="region of interest" description="MPER; binding to GalCer" evidence="1">
    <location>
        <begin position="649"/>
        <end position="670"/>
    </location>
</feature>
<feature type="region of interest" description="Disordered" evidence="2">
    <location>
        <begin position="706"/>
        <end position="731"/>
    </location>
</feature>
<feature type="coiled-coil region" evidence="1">
    <location>
        <begin position="620"/>
        <end position="654"/>
    </location>
</feature>
<feature type="short sequence motif" description="YXXL motif; contains endocytosis signal" evidence="1">
    <location>
        <begin position="699"/>
        <end position="702"/>
    </location>
</feature>
<feature type="short sequence motif" description="Di-leucine internalization motif" evidence="1">
    <location>
        <begin position="842"/>
        <end position="843"/>
    </location>
</feature>
<feature type="site" description="Cleavage; by host furin" evidence="1">
    <location>
        <begin position="498"/>
        <end position="499"/>
    </location>
</feature>
<feature type="lipid moiety-binding region" description="S-palmitoyl cysteine; by host" evidence="1">
    <location>
        <position position="751"/>
    </location>
</feature>
<feature type="glycosylation site" description="N-linked (GlcNAc...) asparagine; by host" evidence="1">
    <location>
        <position position="87"/>
    </location>
</feature>
<feature type="glycosylation site" description="N-linked (GlcNAc...) asparagine; by host" evidence="1">
    <location>
        <position position="129"/>
    </location>
</feature>
<feature type="glycosylation site" description="N-linked (GlcNAc...) asparagine; by host" evidence="1">
    <location>
        <position position="135"/>
    </location>
</feature>
<feature type="glycosylation site" description="N-linked (GlcNAc...) asparagine; by host" evidence="1">
    <location>
        <position position="138"/>
    </location>
</feature>
<feature type="glycosylation site" description="N-linked (GlcNAc...) asparagine; by host" evidence="1">
    <location>
        <position position="154"/>
    </location>
</feature>
<feature type="glycosylation site" description="N-linked (GlcNAc...) asparagine; by host" evidence="1">
    <location>
        <position position="158"/>
    </location>
</feature>
<feature type="glycosylation site" description="N-linked (GlcNAc...) asparagine; by host" evidence="1">
    <location>
        <position position="184"/>
    </location>
</feature>
<feature type="glycosylation site" description="N-linked (GlcNAc...) asparagine; by host" evidence="1">
    <location>
        <position position="193"/>
    </location>
</feature>
<feature type="glycosylation site" description="N-linked (GlcNAc...) asparagine; by host" evidence="1">
    <location>
        <position position="230"/>
    </location>
</feature>
<feature type="glycosylation site" description="N-linked (GlcNAc...) asparagine; by host" evidence="1">
    <location>
        <position position="237"/>
    </location>
</feature>
<feature type="glycosylation site" description="N-linked (GlcNAc...) asparagine; by host" evidence="1">
    <location>
        <position position="258"/>
    </location>
</feature>
<feature type="glycosylation site" description="N-linked (GlcNAc...) asparagine; by host" evidence="1">
    <location>
        <position position="272"/>
    </location>
</feature>
<feature type="glycosylation site" description="N-linked (GlcNAc...) asparagine; by host" evidence="1">
    <location>
        <position position="285"/>
    </location>
</feature>
<feature type="glycosylation site" description="N-linked (GlcNAc...) asparagine; by host" evidence="1">
    <location>
        <position position="291"/>
    </location>
</feature>
<feature type="glycosylation site" description="N-linked (GlcNAc...) asparagine; by host" evidence="1">
    <location>
        <position position="297"/>
    </location>
</feature>
<feature type="glycosylation site" description="N-linked (GlcNAc...) asparagine; by host" evidence="1">
    <location>
        <position position="327"/>
    </location>
</feature>
<feature type="glycosylation site" description="N-linked (GlcNAc...) asparagine; by host" evidence="1">
    <location>
        <position position="351"/>
    </location>
</feature>
<feature type="glycosylation site" description="N-linked (GlcNAc...) asparagine; by host" evidence="1">
    <location>
        <position position="381"/>
    </location>
</feature>
<feature type="glycosylation site" description="N-linked (GlcNAc...) asparagine; by host" evidence="1">
    <location>
        <position position="389"/>
    </location>
</feature>
<feature type="glycosylation site" description="N-linked (GlcNAc...) asparagine; by host" evidence="1">
    <location>
        <position position="395"/>
    </location>
</feature>
<feature type="glycosylation site" description="N-linked (GlcNAc...) asparagine; by host" evidence="1">
    <location>
        <position position="400"/>
    </location>
</feature>
<feature type="glycosylation site" description="N-linked (GlcNAc...) asparagine; by host" evidence="1">
    <location>
        <position position="435"/>
    </location>
</feature>
<feature type="glycosylation site" description="N-linked (GlcNAc...) asparagine; by host" evidence="1">
    <location>
        <position position="450"/>
    </location>
</feature>
<feature type="glycosylation site" description="N-linked (GlcNAc...) asparagine; by host" evidence="1">
    <location>
        <position position="598"/>
    </location>
</feature>
<feature type="glycosylation site" description="N-linked (GlcNAc...) asparagine; by host" evidence="1">
    <location>
        <position position="603"/>
    </location>
</feature>
<feature type="glycosylation site" description="N-linked (GlcNAc...) asparagine; by host" evidence="1">
    <location>
        <position position="612"/>
    </location>
</feature>
<feature type="glycosylation site" description="N-linked (GlcNAc...) asparagine; by host" evidence="1">
    <location>
        <position position="624"/>
    </location>
</feature>
<feature type="disulfide bond" evidence="1">
    <location>
        <begin position="53"/>
        <end position="73"/>
    </location>
</feature>
<feature type="disulfide bond" evidence="1">
    <location>
        <begin position="118"/>
        <end position="201"/>
    </location>
</feature>
<feature type="disulfide bond" evidence="1">
    <location>
        <begin position="125"/>
        <end position="192"/>
    </location>
</feature>
<feature type="disulfide bond" evidence="1">
    <location>
        <begin position="130"/>
        <end position="155"/>
    </location>
</feature>
<feature type="disulfide bond" evidence="1">
    <location>
        <begin position="214"/>
        <end position="243"/>
    </location>
</feature>
<feature type="disulfide bond" evidence="1">
    <location>
        <begin position="224"/>
        <end position="235"/>
    </location>
</feature>
<feature type="disulfide bond" evidence="1">
    <location>
        <begin position="292"/>
        <end position="326"/>
    </location>
</feature>
<feature type="disulfide bond" evidence="1">
    <location>
        <begin position="373"/>
        <end position="432"/>
    </location>
</feature>
<feature type="disulfide bond" evidence="1">
    <location>
        <begin position="380"/>
        <end position="405"/>
    </location>
</feature>
<feature type="disulfide bond" evidence="1">
    <location>
        <begin position="585"/>
        <end position="591"/>
    </location>
</feature>
<feature type="strand" evidence="11">
    <location>
        <begin position="52"/>
        <end position="55"/>
    </location>
</feature>
<feature type="strand" evidence="9">
    <location>
        <begin position="59"/>
        <end position="61"/>
    </location>
</feature>
<feature type="helix" evidence="11">
    <location>
        <begin position="64"/>
        <end position="72"/>
    </location>
</feature>
<feature type="strand" evidence="11">
    <location>
        <begin position="73"/>
        <end position="75"/>
    </location>
</feature>
<feature type="strand" evidence="11">
    <location>
        <begin position="82"/>
        <end position="84"/>
    </location>
</feature>
<feature type="strand" evidence="11">
    <location>
        <begin position="90"/>
        <end position="93"/>
    </location>
</feature>
<feature type="helix" evidence="13">
    <location>
        <begin position="94"/>
        <end position="96"/>
    </location>
</feature>
<feature type="helix" evidence="11">
    <location>
        <begin position="98"/>
        <end position="114"/>
    </location>
</feature>
<feature type="strand" evidence="11">
    <location>
        <begin position="118"/>
        <end position="122"/>
    </location>
</feature>
<feature type="strand" evidence="3">
    <location>
        <begin position="127"/>
        <end position="129"/>
    </location>
</feature>
<feature type="strand" evidence="11">
    <location>
        <begin position="195"/>
        <end position="198"/>
    </location>
</feature>
<feature type="strand" evidence="8">
    <location>
        <begin position="201"/>
        <end position="204"/>
    </location>
</feature>
<feature type="strand" evidence="11">
    <location>
        <begin position="211"/>
        <end position="214"/>
    </location>
</feature>
<feature type="strand" evidence="11">
    <location>
        <begin position="219"/>
        <end position="224"/>
    </location>
</feature>
<feature type="strand" evidence="11">
    <location>
        <begin position="231"/>
        <end position="243"/>
    </location>
</feature>
<feature type="strand" evidence="11">
    <location>
        <begin position="252"/>
        <end position="258"/>
    </location>
</feature>
<feature type="strand" evidence="11">
    <location>
        <begin position="263"/>
        <end position="265"/>
    </location>
</feature>
<feature type="strand" evidence="11">
    <location>
        <begin position="267"/>
        <end position="269"/>
    </location>
</feature>
<feature type="strand" evidence="10">
    <location>
        <begin position="276"/>
        <end position="278"/>
    </location>
</feature>
<feature type="strand" evidence="11">
    <location>
        <begin position="280"/>
        <end position="294"/>
    </location>
</feature>
<feature type="strand" evidence="7">
    <location>
        <begin position="298"/>
        <end position="300"/>
    </location>
</feature>
<feature type="turn" evidence="3">
    <location>
        <begin position="306"/>
        <end position="308"/>
    </location>
</feature>
<feature type="strand" evidence="11">
    <location>
        <begin position="323"/>
        <end position="329"/>
    </location>
</feature>
<feature type="helix" evidence="11">
    <location>
        <begin position="330"/>
        <end position="348"/>
    </location>
</feature>
<feature type="strand" evidence="7">
    <location>
        <begin position="350"/>
        <end position="352"/>
    </location>
</feature>
<feature type="strand" evidence="11">
    <location>
        <begin position="353"/>
        <end position="356"/>
    </location>
</feature>
<feature type="helix" evidence="11">
    <location>
        <begin position="364"/>
        <end position="367"/>
    </location>
</feature>
<feature type="strand" evidence="11">
    <location>
        <begin position="369"/>
        <end position="373"/>
    </location>
</feature>
<feature type="strand" evidence="11">
    <location>
        <begin position="376"/>
        <end position="380"/>
    </location>
</feature>
<feature type="helix" evidence="11">
    <location>
        <begin position="383"/>
        <end position="385"/>
    </location>
</feature>
<feature type="strand" evidence="4">
    <location>
        <begin position="388"/>
        <end position="391"/>
    </location>
</feature>
<feature type="helix" evidence="12">
    <location>
        <begin position="392"/>
        <end position="394"/>
    </location>
</feature>
<feature type="turn" evidence="7">
    <location>
        <begin position="396"/>
        <end position="398"/>
    </location>
</feature>
<feature type="strand" evidence="11">
    <location>
        <begin position="400"/>
        <end position="412"/>
    </location>
</feature>
<feature type="strand" evidence="11">
    <location>
        <begin position="414"/>
        <end position="421"/>
    </location>
</feature>
<feature type="strand" evidence="5">
    <location>
        <begin position="426"/>
        <end position="429"/>
    </location>
</feature>
<feature type="strand" evidence="11">
    <location>
        <begin position="430"/>
        <end position="443"/>
    </location>
</feature>
<feature type="strand" evidence="6">
    <location>
        <begin position="446"/>
        <end position="449"/>
    </location>
</feature>
<feature type="strand" evidence="11">
    <location>
        <begin position="452"/>
        <end position="457"/>
    </location>
</feature>
<feature type="helix" evidence="11">
    <location>
        <begin position="462"/>
        <end position="470"/>
    </location>
</feature>
<feature type="strand" evidence="11">
    <location>
        <begin position="473"/>
        <end position="477"/>
    </location>
</feature>
<sequence length="843" mass="95648">MRATEIRKNYQHLWKGGTLLLGMLMICSAAEQLWVTVYYGVPVWKEATTTLFCASDAKAYDTEVHNVWATHACVPTDPNPQEVKLENVTENFNMWKNNMVEQMHEDIISLWDQSLKPCVKLTPLCVTLNCTDLRNATNTTSSSWETMEKGEIKNCSFNITTSIRDKVQKEYALFYNLDVVPIDNASYRLISCNTSVITQACPKVSFEPIPIHYCAPAGFAILKCNDKKFNGTGPCTNVSTVQCTHGIRPVVSTQLLLNGSLAEEEIVIRSENFTNNAKTIIVQLNESVVINCTRPNNNTRKSINIGPGRALYTTGEIIGDIRQAHCNLSKTQWENTLEQIAIKLKEQFGNNKTIIFNPSSGGDPEIVTHSFNCGGEFFYCNSTQLFTWNDTRKLNNTGRNITLPCRIKQIINMWQEVGKAMYAPPIRGQIRCSSNITGLLLTRDGGKDTNGTEIFRPGGGDMRDNWRSELYKYKVVKIEPLGVAPTKAKRRVVQREKRAVGLGALFLGFLGAAGSTMGAASITLTVQARQLLSGIVQQQNNLLRAIEAQQHLLQLTVWGIKQLQARVLAVERYLRDQQLLGIWGCSGKLICTTTVPWNTSWSNKSLNEIWDNMTWMKWEREIDNYTHIIYSLIEQSQNQQEKNEQELLALDKWASLWNWFDITKWLWYIKIFIMIVGGLIGLRIVFVVLSIVNRVRQGYSPLSFQTHLPAQRGPDRPDGIEEEGGERDRDRSGPLVDGFLAIIWVDLRSLCLFSYHRLRDLLLIVTRIVELLGRRGWGVLKYWWNLLQYWIQELKNSAVSLLNATAIAVAEGTDRVIEILQRAFRAVLHIPVRIRQGLERALL</sequence>
<protein>
    <recommendedName>
        <fullName evidence="1">Envelope glycoprotein gp160</fullName>
    </recommendedName>
    <alternativeName>
        <fullName evidence="1">Env polyprotein</fullName>
    </alternativeName>
    <component>
        <recommendedName>
            <fullName evidence="1">Surface protein gp120</fullName>
            <shortName evidence="1">SU</shortName>
        </recommendedName>
        <alternativeName>
            <fullName evidence="1">Glycoprotein 120</fullName>
            <shortName evidence="1">gp120</shortName>
        </alternativeName>
    </component>
    <component>
        <recommendedName>
            <fullName evidence="1">Transmembrane protein gp41</fullName>
            <shortName evidence="1">TM</shortName>
        </recommendedName>
        <alternativeName>
            <fullName evidence="1">Glycoprotein 41</fullName>
            <shortName evidence="1">gp41</shortName>
        </alternativeName>
    </component>
</protein>